<keyword id="KW-1003">Cell membrane</keyword>
<keyword id="KW-0325">Glycoprotein</keyword>
<keyword id="KW-0472">Membrane</keyword>
<keyword id="KW-1185">Reference proteome</keyword>
<keyword id="KW-0812">Transmembrane</keyword>
<keyword id="KW-1133">Transmembrane helix</keyword>
<gene>
    <name evidence="5" type="primary">GIN3</name>
    <name evidence="7" type="ORF">AOL_s00076g286</name>
</gene>
<feature type="chain" id="PRO_0000462169" description="Receptor GIN3">
    <location>
        <begin position="1"/>
        <end position="411"/>
    </location>
</feature>
<feature type="topological domain" description="Extracellular" evidence="6">
    <location>
        <begin position="1"/>
        <end position="99"/>
    </location>
</feature>
<feature type="transmembrane region" description="Helical" evidence="1">
    <location>
        <begin position="100"/>
        <end position="120"/>
    </location>
</feature>
<feature type="topological domain" description="Cytoplasmic" evidence="6">
    <location>
        <begin position="121"/>
        <end position="134"/>
    </location>
</feature>
<feature type="transmembrane region" description="Helical" evidence="1">
    <location>
        <begin position="135"/>
        <end position="155"/>
    </location>
</feature>
<feature type="topological domain" description="Extracellular" evidence="6">
    <location>
        <begin position="156"/>
        <end position="181"/>
    </location>
</feature>
<feature type="transmembrane region" description="Helical" evidence="1">
    <location>
        <begin position="182"/>
        <end position="202"/>
    </location>
</feature>
<feature type="topological domain" description="Cytoplasmic" evidence="6">
    <location>
        <begin position="203"/>
        <end position="227"/>
    </location>
</feature>
<feature type="transmembrane region" description="Helical" evidence="1">
    <location>
        <begin position="228"/>
        <end position="248"/>
    </location>
</feature>
<feature type="topological domain" description="Extracellular" evidence="6">
    <location>
        <begin position="249"/>
        <end position="262"/>
    </location>
</feature>
<feature type="transmembrane region" description="Helical" evidence="1">
    <location>
        <begin position="263"/>
        <end position="283"/>
    </location>
</feature>
<feature type="topological domain" description="Cytoplasmic" evidence="6">
    <location>
        <begin position="284"/>
        <end position="292"/>
    </location>
</feature>
<feature type="transmembrane region" description="Helical" evidence="1">
    <location>
        <begin position="293"/>
        <end position="313"/>
    </location>
</feature>
<feature type="topological domain" description="Extracellular" evidence="6">
    <location>
        <begin position="314"/>
        <end position="328"/>
    </location>
</feature>
<feature type="transmembrane region" description="Helical" evidence="1">
    <location>
        <begin position="329"/>
        <end position="349"/>
    </location>
</feature>
<feature type="topological domain" description="Cytoplasmic" evidence="6">
    <location>
        <begin position="350"/>
        <end position="411"/>
    </location>
</feature>
<feature type="region of interest" description="Disordered" evidence="3">
    <location>
        <begin position="371"/>
        <end position="411"/>
    </location>
</feature>
<feature type="compositionally biased region" description="Low complexity" evidence="3">
    <location>
        <begin position="372"/>
        <end position="389"/>
    </location>
</feature>
<feature type="glycosylation site" description="N-linked (GlcNAc...) asparagine" evidence="2">
    <location>
        <position position="321"/>
    </location>
</feature>
<feature type="glycosylation site" description="N-linked (GlcNAc...) asparagine" evidence="2">
    <location>
        <position position="326"/>
    </location>
</feature>
<accession>G1X9H9</accession>
<reference evidence="8" key="1">
    <citation type="journal article" date="2011" name="PLoS Pathog.">
        <title>Genomic and proteomic analyses of the fungus Arthrobotrys oligospora provide insights into nematode-trap formation.</title>
        <authorList>
            <person name="Yang J."/>
            <person name="Wang L."/>
            <person name="Ji X."/>
            <person name="Feng Y."/>
            <person name="Li X."/>
            <person name="Zou C."/>
            <person name="Xu J."/>
            <person name="Ren Y."/>
            <person name="Mi Q."/>
            <person name="Wu J."/>
            <person name="Liu S."/>
            <person name="Liu Y."/>
            <person name="Huang X."/>
            <person name="Wang H."/>
            <person name="Niu X."/>
            <person name="Li J."/>
            <person name="Liang L."/>
            <person name="Luo Y."/>
            <person name="Ji K."/>
            <person name="Zhou W."/>
            <person name="Yu Z."/>
            <person name="Li G."/>
            <person name="Liu Y."/>
            <person name="Li L."/>
            <person name="Qiao M."/>
            <person name="Feng L."/>
            <person name="Zhang K.-Q."/>
        </authorList>
    </citation>
    <scope>NUCLEOTIDE SEQUENCE [LARGE SCALE GENOMIC DNA]</scope>
    <source>
        <strain evidence="8">ATCC 24927 / CBS 115.81 / DSM 1491</strain>
    </source>
</reference>
<reference evidence="6" key="2">
    <citation type="journal article" date="2024" name="Nat. Microbiol.">
        <title>The nematode-trapping fungus Arthrobotrys oligospora detects prey pheromones via G protein-coupled receptors.</title>
        <authorList>
            <person name="Kuo C.Y."/>
            <person name="Tay R.J."/>
            <person name="Lin H.C."/>
            <person name="Juan S.C."/>
            <person name="Vidal-Diez de Ulzurrun G."/>
            <person name="Chang Y.C."/>
            <person name="Hoki J."/>
            <person name="Schroeder F.C."/>
            <person name="Hsueh Y.P."/>
        </authorList>
    </citation>
    <scope>FUNCTION</scope>
    <scope>INTERACTION WITH GPA2</scope>
    <scope>SUBCELLULAR LOCATION</scope>
    <scope>INDUCTION</scope>
    <scope>DISRUPTION PHENOTYPE</scope>
    <source>
        <strain evidence="5">TWF154</strain>
    </source>
</reference>
<organism evidence="8">
    <name type="scientific">Arthrobotrys oligospora (strain ATCC 24927 / CBS 115.81 / DSM 1491)</name>
    <name type="common">Nematode-trapping fungus</name>
    <name type="synonym">Didymozoophaga oligospora</name>
    <dbReference type="NCBI Taxonomy" id="756982"/>
    <lineage>
        <taxon>Eukaryota</taxon>
        <taxon>Fungi</taxon>
        <taxon>Dikarya</taxon>
        <taxon>Ascomycota</taxon>
        <taxon>Pezizomycotina</taxon>
        <taxon>Orbiliomycetes</taxon>
        <taxon>Orbiliales</taxon>
        <taxon>Orbiliaceae</taxon>
        <taxon>Orbilia</taxon>
        <taxon>Orbilia oligospora</taxon>
    </lineage>
</organism>
<comment type="function">
    <text evidence="4">Receptor that senses nematode-derived signals at the cell surface and signals via adenylate cyclase to positively regulate trap formation for nematode capture.</text>
</comment>
<comment type="subunit">
    <text evidence="4">Interacts with guanine nucleotide-binding protein alpha GPA2; to activate adenylate cyclase and positively regulate nematode trap formation.</text>
</comment>
<comment type="subcellular location">
    <subcellularLocation>
        <location evidence="4">Cell membrane</location>
        <topology evidence="1">Multi-pass membrane protein</topology>
    </subcellularLocation>
    <text evidence="4">Relocalizes to the vacuole following stimulation by ligand.</text>
</comment>
<comment type="induction">
    <text evidence="4">Induced following nematode exposure.</text>
</comment>
<comment type="disruption phenotype">
    <text evidence="4">Decreases cAMP levels following exposure to C.elegans (PubMed:38649409). Decreases trap formation following exposure to C.elegans; formed traps exhibit abnormal morphology with a single hyphal loop (PubMed:38649409).</text>
</comment>
<comment type="similarity">
    <text evidence="6">Belongs to the SAT4 family.</text>
</comment>
<sequence>MSGFVAGEEAVKSALSAATWIGAASPKYSHLVLSRVFNIYSEYIYANGFKLTRENLIEDFGTRPEDVDPFMKIFGGPNGIATYLTALPGLLPILPHPRNIPIIVPLFCVFTVMTSLAVGLRLWSRQKVAGGIRSFDWLALAGFGLTIIYGAVSVYHSKVSGPYQAFYDRTWDQMKENYKVYLVLTIMYPFIMGLIKISLLLFYYRVATLNYVQWAVYATGSLTIANSIAAIITHCLAFMPIDFWNHFLQSPFKFNSRTPMLVFGAVYILTDVAILIIPMPMVFQLKLYPREKVIAVIAFSLGGVACVASGFRIWAIDEFQNYSGKNSSGLMIDAWTMIELNLTLICASAPAIRALAIHYAPKILSTLPSAFSSSGATRGSKSAGSSGKSKTPESEKSMQVSQSPVIPKEVV</sequence>
<protein>
    <recommendedName>
        <fullName evidence="6">Receptor GIN3</fullName>
    </recommendedName>
    <alternativeName>
        <fullName evidence="5">GPCR induced by nematodes 3</fullName>
    </alternativeName>
</protein>
<dbReference type="EMBL" id="ADOT01000125">
    <property type="protein sequence ID" value="EGX50211.1"/>
    <property type="molecule type" value="Genomic_DNA"/>
</dbReference>
<dbReference type="RefSeq" id="XP_011121141.1">
    <property type="nucleotide sequence ID" value="XM_011122839.1"/>
</dbReference>
<dbReference type="STRING" id="756982.G1X9H9"/>
<dbReference type="GeneID" id="22892049"/>
<dbReference type="HOGENOM" id="CLU_045271_0_0_1"/>
<dbReference type="InParanoid" id="G1X9H9"/>
<dbReference type="OMA" id="FRIWAID"/>
<dbReference type="OrthoDB" id="2054885at2759"/>
<dbReference type="Proteomes" id="UP000008784">
    <property type="component" value="Unassembled WGS sequence"/>
</dbReference>
<dbReference type="GO" id="GO:0005886">
    <property type="term" value="C:plasma membrane"/>
    <property type="evidence" value="ECO:0007669"/>
    <property type="project" value="UniProtKB-SubCell"/>
</dbReference>
<dbReference type="InterPro" id="IPR049326">
    <property type="entry name" value="Rhodopsin_dom_fungi"/>
</dbReference>
<dbReference type="InterPro" id="IPR052337">
    <property type="entry name" value="SAT4-like"/>
</dbReference>
<dbReference type="PANTHER" id="PTHR33048:SF47">
    <property type="entry name" value="INTEGRAL MEMBRANE PROTEIN-RELATED"/>
    <property type="match status" value="1"/>
</dbReference>
<dbReference type="PANTHER" id="PTHR33048">
    <property type="entry name" value="PTH11-LIKE INTEGRAL MEMBRANE PROTEIN (AFU_ORTHOLOGUE AFUA_5G11245)"/>
    <property type="match status" value="1"/>
</dbReference>
<dbReference type="Pfam" id="PF20684">
    <property type="entry name" value="Fung_rhodopsin"/>
    <property type="match status" value="1"/>
</dbReference>
<evidence type="ECO:0000255" key="1"/>
<evidence type="ECO:0000255" key="2">
    <source>
        <dbReference type="PROSITE-ProRule" id="PRU00498"/>
    </source>
</evidence>
<evidence type="ECO:0000256" key="3">
    <source>
        <dbReference type="SAM" id="MobiDB-lite"/>
    </source>
</evidence>
<evidence type="ECO:0000269" key="4">
    <source>
    </source>
</evidence>
<evidence type="ECO:0000303" key="5">
    <source>
    </source>
</evidence>
<evidence type="ECO:0000305" key="6"/>
<evidence type="ECO:0000312" key="7">
    <source>
        <dbReference type="EMBL" id="EGX50211.1"/>
    </source>
</evidence>
<evidence type="ECO:0000312" key="8">
    <source>
        <dbReference type="Proteomes" id="UP000008784"/>
    </source>
</evidence>
<proteinExistence type="evidence at protein level"/>
<name>GIN3_ARTOA</name>